<reference key="1">
    <citation type="submission" date="2007-09" db="EMBL/GenBank/DDBJ databases">
        <title>Complete sequence of chromosome of Serratia proteamaculans 568.</title>
        <authorList>
            <consortium name="US DOE Joint Genome Institute"/>
            <person name="Copeland A."/>
            <person name="Lucas S."/>
            <person name="Lapidus A."/>
            <person name="Barry K."/>
            <person name="Glavina del Rio T."/>
            <person name="Dalin E."/>
            <person name="Tice H."/>
            <person name="Pitluck S."/>
            <person name="Chain P."/>
            <person name="Malfatti S."/>
            <person name="Shin M."/>
            <person name="Vergez L."/>
            <person name="Schmutz J."/>
            <person name="Larimer F."/>
            <person name="Land M."/>
            <person name="Hauser L."/>
            <person name="Kyrpides N."/>
            <person name="Kim E."/>
            <person name="Taghavi S."/>
            <person name="Newman L."/>
            <person name="Vangronsveld J."/>
            <person name="van der Lelie D."/>
            <person name="Richardson P."/>
        </authorList>
    </citation>
    <scope>NUCLEOTIDE SEQUENCE [LARGE SCALE GENOMIC DNA]</scope>
    <source>
        <strain>568</strain>
    </source>
</reference>
<protein>
    <recommendedName>
        <fullName evidence="1">Glycine dehydrogenase (decarboxylating)</fullName>
        <ecNumber evidence="1">1.4.4.2</ecNumber>
    </recommendedName>
    <alternativeName>
        <fullName evidence="1">Glycine cleavage system P-protein</fullName>
    </alternativeName>
    <alternativeName>
        <fullName evidence="1">Glycine decarboxylase</fullName>
    </alternativeName>
    <alternativeName>
        <fullName evidence="1">Glycine dehydrogenase (aminomethyl-transferring)</fullName>
    </alternativeName>
</protein>
<sequence>MTQTLSQLEHSEAFIERHIGSSAQQQQQLLEAVGARSLNALIQQIVPADIQLPAPPPVGDAATEHQALAELKAIASQNQRYKSYIGMGYSAVLTPPVILRNMLENPGWYTAYTPYQPEVSQGRLEALLNFQTVTLDLTGLDLASASLLDEATAAAEAMALAKRASKLKDANRFFVADDVHPQTLDVVRTRAATFGFEVIVDKAEKVLELQGVFGVLLQQVGTTGELHDYSALLAELKNRKIGTSVAADIMALVLLTAPGKQGADVVFGSAQRFGVPMGYGGPHAAFFACRDEFKRSMPGRIIGVSRDAAGNTALRMAMQTREQHIRREKANSNICTSQVLLANIASLYAVYHGPQGLQRIAGRIHRLTDILAAGLQQAGLQLRHKTWFDTLTVEVKDKAAVLERALSFGINLRTDIHGAVGITLDEATSREDVQTLFALLAGDNHGLDIDALDAAVSKNSQSIPAGMLRKDPILTHPVFNSYHSETEMMRYMHRLERKDLALNQAMIPLGSCTMKLNAAAEMIPITWPEFSELHPFCPPEQAAGYKQMIGQLSQWLVQLTGYDAVCMQPNSGAQGEYAGLLAIRHYHESRNESGRHICLIPSSAHGTNPASAQMAGMSVVVVACDKNGNIDLHDLRVKAEQAGEELSCIMVTYPSTHGVYEETIREVCQIVHQFGGQVYLDGANMNAQVGITTPGYIGADVSHLNLHKTFCIPHGGGGPGMGPIGVKAHLAPFVPGHSVVQIDGVLTQQGAVSAAPFGSASILPISWMYIRMMGAEGLKQASQVAILNANYIATRLKDAYPVLYTGRDHRVAHECILDIRPLKEETGISEMDIAKRLIDYGFHAPTMSFPVAGTLMVEPTESESKVELDRFIDAMLAIRSEIDRVAKGEWPLEDNPLVNAPHIQAELVSDWQHAYSRELAVFPIAGVRENKYWPSVKRLDDVYGDRNLFCSCVPMSEYE</sequence>
<gene>
    <name evidence="1" type="primary">gcvP</name>
    <name type="ordered locus">Spro_3914</name>
</gene>
<evidence type="ECO:0000255" key="1">
    <source>
        <dbReference type="HAMAP-Rule" id="MF_00711"/>
    </source>
</evidence>
<feature type="chain" id="PRO_1000062077" description="Glycine dehydrogenase (decarboxylating)">
    <location>
        <begin position="1"/>
        <end position="959"/>
    </location>
</feature>
<feature type="modified residue" description="N6-(pyridoxal phosphate)lysine" evidence="1">
    <location>
        <position position="708"/>
    </location>
</feature>
<accession>A8GIR9</accession>
<dbReference type="EC" id="1.4.4.2" evidence="1"/>
<dbReference type="EMBL" id="CP000826">
    <property type="protein sequence ID" value="ABV43009.1"/>
    <property type="molecule type" value="Genomic_DNA"/>
</dbReference>
<dbReference type="SMR" id="A8GIR9"/>
<dbReference type="STRING" id="399741.Spro_3914"/>
<dbReference type="KEGG" id="spe:Spro_3914"/>
<dbReference type="eggNOG" id="COG0403">
    <property type="taxonomic scope" value="Bacteria"/>
</dbReference>
<dbReference type="eggNOG" id="COG1003">
    <property type="taxonomic scope" value="Bacteria"/>
</dbReference>
<dbReference type="HOGENOM" id="CLU_004620_1_1_6"/>
<dbReference type="OrthoDB" id="9801272at2"/>
<dbReference type="GO" id="GO:0005829">
    <property type="term" value="C:cytosol"/>
    <property type="evidence" value="ECO:0007669"/>
    <property type="project" value="TreeGrafter"/>
</dbReference>
<dbReference type="GO" id="GO:0005960">
    <property type="term" value="C:glycine cleavage complex"/>
    <property type="evidence" value="ECO:0007669"/>
    <property type="project" value="TreeGrafter"/>
</dbReference>
<dbReference type="GO" id="GO:0016594">
    <property type="term" value="F:glycine binding"/>
    <property type="evidence" value="ECO:0007669"/>
    <property type="project" value="TreeGrafter"/>
</dbReference>
<dbReference type="GO" id="GO:0004375">
    <property type="term" value="F:glycine dehydrogenase (decarboxylating) activity"/>
    <property type="evidence" value="ECO:0007669"/>
    <property type="project" value="UniProtKB-EC"/>
</dbReference>
<dbReference type="GO" id="GO:0030170">
    <property type="term" value="F:pyridoxal phosphate binding"/>
    <property type="evidence" value="ECO:0007669"/>
    <property type="project" value="TreeGrafter"/>
</dbReference>
<dbReference type="GO" id="GO:0019464">
    <property type="term" value="P:glycine decarboxylation via glycine cleavage system"/>
    <property type="evidence" value="ECO:0007669"/>
    <property type="project" value="UniProtKB-UniRule"/>
</dbReference>
<dbReference type="CDD" id="cd00613">
    <property type="entry name" value="GDC-P"/>
    <property type="match status" value="2"/>
</dbReference>
<dbReference type="FunFam" id="3.40.640.10:FF:000005">
    <property type="entry name" value="Glycine dehydrogenase (decarboxylating), mitochondrial"/>
    <property type="match status" value="1"/>
</dbReference>
<dbReference type="FunFam" id="3.90.1150.10:FF:000007">
    <property type="entry name" value="Glycine dehydrogenase (decarboxylating), mitochondrial"/>
    <property type="match status" value="1"/>
</dbReference>
<dbReference type="FunFam" id="3.40.640.10:FF:000007">
    <property type="entry name" value="glycine dehydrogenase (Decarboxylating), mitochondrial"/>
    <property type="match status" value="1"/>
</dbReference>
<dbReference type="Gene3D" id="3.90.1150.10">
    <property type="entry name" value="Aspartate Aminotransferase, domain 1"/>
    <property type="match status" value="2"/>
</dbReference>
<dbReference type="Gene3D" id="3.40.640.10">
    <property type="entry name" value="Type I PLP-dependent aspartate aminotransferase-like (Major domain)"/>
    <property type="match status" value="2"/>
</dbReference>
<dbReference type="HAMAP" id="MF_00711">
    <property type="entry name" value="GcvP"/>
    <property type="match status" value="1"/>
</dbReference>
<dbReference type="InterPro" id="IPR003437">
    <property type="entry name" value="GcvP"/>
</dbReference>
<dbReference type="InterPro" id="IPR049316">
    <property type="entry name" value="GDC-P_C"/>
</dbReference>
<dbReference type="InterPro" id="IPR049315">
    <property type="entry name" value="GDC-P_N"/>
</dbReference>
<dbReference type="InterPro" id="IPR020581">
    <property type="entry name" value="GDC_P"/>
</dbReference>
<dbReference type="InterPro" id="IPR015424">
    <property type="entry name" value="PyrdxlP-dep_Trfase"/>
</dbReference>
<dbReference type="InterPro" id="IPR015421">
    <property type="entry name" value="PyrdxlP-dep_Trfase_major"/>
</dbReference>
<dbReference type="InterPro" id="IPR015422">
    <property type="entry name" value="PyrdxlP-dep_Trfase_small"/>
</dbReference>
<dbReference type="NCBIfam" id="TIGR00461">
    <property type="entry name" value="gcvP"/>
    <property type="match status" value="1"/>
</dbReference>
<dbReference type="NCBIfam" id="NF003346">
    <property type="entry name" value="PRK04366.1"/>
    <property type="match status" value="1"/>
</dbReference>
<dbReference type="PANTHER" id="PTHR11773:SF13">
    <property type="entry name" value="GLYCINE DEHYDROGENASE (DECARBOXYLATING)"/>
    <property type="match status" value="1"/>
</dbReference>
<dbReference type="PANTHER" id="PTHR11773">
    <property type="entry name" value="GLYCINE DEHYDROGENASE, DECARBOXYLATING"/>
    <property type="match status" value="1"/>
</dbReference>
<dbReference type="Pfam" id="PF21478">
    <property type="entry name" value="GcvP2_C"/>
    <property type="match status" value="1"/>
</dbReference>
<dbReference type="Pfam" id="PF02347">
    <property type="entry name" value="GDC-P"/>
    <property type="match status" value="2"/>
</dbReference>
<dbReference type="SUPFAM" id="SSF53383">
    <property type="entry name" value="PLP-dependent transferases"/>
    <property type="match status" value="2"/>
</dbReference>
<proteinExistence type="inferred from homology"/>
<organism>
    <name type="scientific">Serratia proteamaculans (strain 568)</name>
    <dbReference type="NCBI Taxonomy" id="399741"/>
    <lineage>
        <taxon>Bacteria</taxon>
        <taxon>Pseudomonadati</taxon>
        <taxon>Pseudomonadota</taxon>
        <taxon>Gammaproteobacteria</taxon>
        <taxon>Enterobacterales</taxon>
        <taxon>Yersiniaceae</taxon>
        <taxon>Serratia</taxon>
    </lineage>
</organism>
<name>GCSP_SERP5</name>
<keyword id="KW-0560">Oxidoreductase</keyword>
<keyword id="KW-0663">Pyridoxal phosphate</keyword>
<comment type="function">
    <text evidence="1">The glycine cleavage system catalyzes the degradation of glycine. The P protein binds the alpha-amino group of glycine through its pyridoxal phosphate cofactor; CO(2) is released and the remaining methylamine moiety is then transferred to the lipoamide cofactor of the H protein.</text>
</comment>
<comment type="catalytic activity">
    <reaction evidence="1">
        <text>N(6)-[(R)-lipoyl]-L-lysyl-[glycine-cleavage complex H protein] + glycine + H(+) = N(6)-[(R)-S(8)-aminomethyldihydrolipoyl]-L-lysyl-[glycine-cleavage complex H protein] + CO2</text>
        <dbReference type="Rhea" id="RHEA:24304"/>
        <dbReference type="Rhea" id="RHEA-COMP:10494"/>
        <dbReference type="Rhea" id="RHEA-COMP:10495"/>
        <dbReference type="ChEBI" id="CHEBI:15378"/>
        <dbReference type="ChEBI" id="CHEBI:16526"/>
        <dbReference type="ChEBI" id="CHEBI:57305"/>
        <dbReference type="ChEBI" id="CHEBI:83099"/>
        <dbReference type="ChEBI" id="CHEBI:83143"/>
        <dbReference type="EC" id="1.4.4.2"/>
    </reaction>
</comment>
<comment type="cofactor">
    <cofactor evidence="1">
        <name>pyridoxal 5'-phosphate</name>
        <dbReference type="ChEBI" id="CHEBI:597326"/>
    </cofactor>
</comment>
<comment type="subunit">
    <text evidence="1">The glycine cleavage system is composed of four proteins: P, T, L and H.</text>
</comment>
<comment type="similarity">
    <text evidence="1">Belongs to the GcvP family.</text>
</comment>